<sequence length="207" mass="22662">MVADAQVSESKTAVRRGRLVVLAGPSAVGKSSVVRLLRERMPELVFSVSATTRDPRPGEVDGKDYRFTSRDEFQRMIESGELLEWAEIHGGLQLSGTPAAPVRRAIEQGKPVLVEVDLAGARAVRAAMPEALLVFMAPPSWDVLVERLTGRGTESAEVVERRLATARVELEAQDEFDEVIVNEDVSRSCDELVSLLVGRPEQSESTH</sequence>
<name>KGUA_RHOJR</name>
<organism>
    <name type="scientific">Rhodococcus jostii (strain RHA1)</name>
    <dbReference type="NCBI Taxonomy" id="101510"/>
    <lineage>
        <taxon>Bacteria</taxon>
        <taxon>Bacillati</taxon>
        <taxon>Actinomycetota</taxon>
        <taxon>Actinomycetes</taxon>
        <taxon>Mycobacteriales</taxon>
        <taxon>Nocardiaceae</taxon>
        <taxon>Rhodococcus</taxon>
    </lineage>
</organism>
<keyword id="KW-0067">ATP-binding</keyword>
<keyword id="KW-0963">Cytoplasm</keyword>
<keyword id="KW-0418">Kinase</keyword>
<keyword id="KW-0547">Nucleotide-binding</keyword>
<keyword id="KW-0808">Transferase</keyword>
<accession>Q0S0L7</accession>
<feature type="chain" id="PRO_0000266382" description="Guanylate kinase">
    <location>
        <begin position="1"/>
        <end position="207"/>
    </location>
</feature>
<feature type="domain" description="Guanylate kinase-like" evidence="1">
    <location>
        <begin position="17"/>
        <end position="197"/>
    </location>
</feature>
<feature type="binding site" evidence="1">
    <location>
        <begin position="24"/>
        <end position="31"/>
    </location>
    <ligand>
        <name>ATP</name>
        <dbReference type="ChEBI" id="CHEBI:30616"/>
    </ligand>
</feature>
<evidence type="ECO:0000255" key="1">
    <source>
        <dbReference type="HAMAP-Rule" id="MF_00328"/>
    </source>
</evidence>
<dbReference type="EC" id="2.7.4.8" evidence="1"/>
<dbReference type="EMBL" id="CP000431">
    <property type="protein sequence ID" value="ABG98919.1"/>
    <property type="molecule type" value="Genomic_DNA"/>
</dbReference>
<dbReference type="RefSeq" id="WP_011598864.1">
    <property type="nucleotide sequence ID" value="NC_008268.1"/>
</dbReference>
<dbReference type="SMR" id="Q0S0L7"/>
<dbReference type="KEGG" id="rha:RHA1_ro07155"/>
<dbReference type="PATRIC" id="fig|101510.16.peg.7208"/>
<dbReference type="eggNOG" id="COG0194">
    <property type="taxonomic scope" value="Bacteria"/>
</dbReference>
<dbReference type="HOGENOM" id="CLU_001715_1_1_11"/>
<dbReference type="OrthoDB" id="9808150at2"/>
<dbReference type="Proteomes" id="UP000008710">
    <property type="component" value="Chromosome"/>
</dbReference>
<dbReference type="GO" id="GO:0005829">
    <property type="term" value="C:cytosol"/>
    <property type="evidence" value="ECO:0007669"/>
    <property type="project" value="TreeGrafter"/>
</dbReference>
<dbReference type="GO" id="GO:0005524">
    <property type="term" value="F:ATP binding"/>
    <property type="evidence" value="ECO:0007669"/>
    <property type="project" value="UniProtKB-UniRule"/>
</dbReference>
<dbReference type="GO" id="GO:0004385">
    <property type="term" value="F:guanylate kinase activity"/>
    <property type="evidence" value="ECO:0007669"/>
    <property type="project" value="UniProtKB-UniRule"/>
</dbReference>
<dbReference type="CDD" id="cd00071">
    <property type="entry name" value="GMPK"/>
    <property type="match status" value="1"/>
</dbReference>
<dbReference type="FunFam" id="3.30.63.10:FF:000002">
    <property type="entry name" value="Guanylate kinase 1"/>
    <property type="match status" value="1"/>
</dbReference>
<dbReference type="Gene3D" id="3.30.63.10">
    <property type="entry name" value="Guanylate Kinase phosphate binding domain"/>
    <property type="match status" value="1"/>
</dbReference>
<dbReference type="Gene3D" id="3.40.50.300">
    <property type="entry name" value="P-loop containing nucleotide triphosphate hydrolases"/>
    <property type="match status" value="1"/>
</dbReference>
<dbReference type="HAMAP" id="MF_00328">
    <property type="entry name" value="Guanylate_kinase"/>
    <property type="match status" value="1"/>
</dbReference>
<dbReference type="InterPro" id="IPR008145">
    <property type="entry name" value="GK/Ca_channel_bsu"/>
</dbReference>
<dbReference type="InterPro" id="IPR008144">
    <property type="entry name" value="Guanylate_kin-like_dom"/>
</dbReference>
<dbReference type="InterPro" id="IPR017665">
    <property type="entry name" value="Guanylate_kinase"/>
</dbReference>
<dbReference type="InterPro" id="IPR020590">
    <property type="entry name" value="Guanylate_kinase_CS"/>
</dbReference>
<dbReference type="InterPro" id="IPR027417">
    <property type="entry name" value="P-loop_NTPase"/>
</dbReference>
<dbReference type="NCBIfam" id="TIGR03263">
    <property type="entry name" value="guanyl_kin"/>
    <property type="match status" value="1"/>
</dbReference>
<dbReference type="PANTHER" id="PTHR23117:SF13">
    <property type="entry name" value="GUANYLATE KINASE"/>
    <property type="match status" value="1"/>
</dbReference>
<dbReference type="PANTHER" id="PTHR23117">
    <property type="entry name" value="GUANYLATE KINASE-RELATED"/>
    <property type="match status" value="1"/>
</dbReference>
<dbReference type="Pfam" id="PF00625">
    <property type="entry name" value="Guanylate_kin"/>
    <property type="match status" value="1"/>
</dbReference>
<dbReference type="SMART" id="SM00072">
    <property type="entry name" value="GuKc"/>
    <property type="match status" value="1"/>
</dbReference>
<dbReference type="SUPFAM" id="SSF52540">
    <property type="entry name" value="P-loop containing nucleoside triphosphate hydrolases"/>
    <property type="match status" value="1"/>
</dbReference>
<dbReference type="PROSITE" id="PS00856">
    <property type="entry name" value="GUANYLATE_KINASE_1"/>
    <property type="match status" value="1"/>
</dbReference>
<dbReference type="PROSITE" id="PS50052">
    <property type="entry name" value="GUANYLATE_KINASE_2"/>
    <property type="match status" value="1"/>
</dbReference>
<protein>
    <recommendedName>
        <fullName evidence="1">Guanylate kinase</fullName>
        <ecNumber evidence="1">2.7.4.8</ecNumber>
    </recommendedName>
    <alternativeName>
        <fullName evidence="1">GMP kinase</fullName>
    </alternativeName>
</protein>
<proteinExistence type="inferred from homology"/>
<comment type="function">
    <text evidence="1">Essential for recycling GMP and indirectly, cGMP.</text>
</comment>
<comment type="catalytic activity">
    <reaction evidence="1">
        <text>GMP + ATP = GDP + ADP</text>
        <dbReference type="Rhea" id="RHEA:20780"/>
        <dbReference type="ChEBI" id="CHEBI:30616"/>
        <dbReference type="ChEBI" id="CHEBI:58115"/>
        <dbReference type="ChEBI" id="CHEBI:58189"/>
        <dbReference type="ChEBI" id="CHEBI:456216"/>
        <dbReference type="EC" id="2.7.4.8"/>
    </reaction>
</comment>
<comment type="subcellular location">
    <subcellularLocation>
        <location evidence="1">Cytoplasm</location>
    </subcellularLocation>
</comment>
<comment type="similarity">
    <text evidence="1">Belongs to the guanylate kinase family.</text>
</comment>
<gene>
    <name evidence="1" type="primary">gmk</name>
    <name type="ordered locus">RHA1_ro07155</name>
</gene>
<reference key="1">
    <citation type="journal article" date="2006" name="Proc. Natl. Acad. Sci. U.S.A.">
        <title>The complete genome of Rhodococcus sp. RHA1 provides insights into a catabolic powerhouse.</title>
        <authorList>
            <person name="McLeod M.P."/>
            <person name="Warren R.L."/>
            <person name="Hsiao W.W.L."/>
            <person name="Araki N."/>
            <person name="Myhre M."/>
            <person name="Fernandes C."/>
            <person name="Miyazawa D."/>
            <person name="Wong W."/>
            <person name="Lillquist A.L."/>
            <person name="Wang D."/>
            <person name="Dosanjh M."/>
            <person name="Hara H."/>
            <person name="Petrescu A."/>
            <person name="Morin R.D."/>
            <person name="Yang G."/>
            <person name="Stott J.M."/>
            <person name="Schein J.E."/>
            <person name="Shin H."/>
            <person name="Smailus D."/>
            <person name="Siddiqui A.S."/>
            <person name="Marra M.A."/>
            <person name="Jones S.J.M."/>
            <person name="Holt R."/>
            <person name="Brinkman F.S.L."/>
            <person name="Miyauchi K."/>
            <person name="Fukuda M."/>
            <person name="Davies J.E."/>
            <person name="Mohn W.W."/>
            <person name="Eltis L.D."/>
        </authorList>
    </citation>
    <scope>NUCLEOTIDE SEQUENCE [LARGE SCALE GENOMIC DNA]</scope>
    <source>
        <strain>RHA1</strain>
    </source>
</reference>